<gene>
    <name evidence="1" type="primary">pyrC</name>
    <name type="ordered locus">Maqu_2505</name>
</gene>
<accession>A1U3L1</accession>
<keyword id="KW-0378">Hydrolase</keyword>
<keyword id="KW-0479">Metal-binding</keyword>
<keyword id="KW-0665">Pyrimidine biosynthesis</keyword>
<keyword id="KW-0862">Zinc</keyword>
<name>PYRC_MARN8</name>
<feature type="chain" id="PRO_0000325573" description="Dihydroorotase">
    <location>
        <begin position="1"/>
        <end position="343"/>
    </location>
</feature>
<feature type="active site" evidence="1">
    <location>
        <position position="247"/>
    </location>
</feature>
<feature type="binding site" evidence="1">
    <location>
        <position position="14"/>
    </location>
    <ligand>
        <name>Zn(2+)</name>
        <dbReference type="ChEBI" id="CHEBI:29105"/>
        <label>1</label>
    </ligand>
</feature>
<feature type="binding site" evidence="1">
    <location>
        <begin position="16"/>
        <end position="18"/>
    </location>
    <ligand>
        <name>substrate</name>
    </ligand>
</feature>
<feature type="binding site" evidence="1">
    <location>
        <position position="16"/>
    </location>
    <ligand>
        <name>Zn(2+)</name>
        <dbReference type="ChEBI" id="CHEBI:29105"/>
        <label>1</label>
    </ligand>
</feature>
<feature type="binding site" evidence="1">
    <location>
        <position position="42"/>
    </location>
    <ligand>
        <name>substrate</name>
    </ligand>
</feature>
<feature type="binding site" description="via carbamate group" evidence="1">
    <location>
        <position position="98"/>
    </location>
    <ligand>
        <name>Zn(2+)</name>
        <dbReference type="ChEBI" id="CHEBI:29105"/>
        <label>1</label>
    </ligand>
</feature>
<feature type="binding site" description="via carbamate group" evidence="1">
    <location>
        <position position="98"/>
    </location>
    <ligand>
        <name>Zn(2+)</name>
        <dbReference type="ChEBI" id="CHEBI:29105"/>
        <label>2</label>
    </ligand>
</feature>
<feature type="binding site" evidence="1">
    <location>
        <position position="135"/>
    </location>
    <ligand>
        <name>substrate</name>
    </ligand>
</feature>
<feature type="binding site" evidence="1">
    <location>
        <position position="135"/>
    </location>
    <ligand>
        <name>Zn(2+)</name>
        <dbReference type="ChEBI" id="CHEBI:29105"/>
        <label>2</label>
    </ligand>
</feature>
<feature type="binding site" evidence="1">
    <location>
        <position position="173"/>
    </location>
    <ligand>
        <name>Zn(2+)</name>
        <dbReference type="ChEBI" id="CHEBI:29105"/>
        <label>2</label>
    </ligand>
</feature>
<feature type="binding site" evidence="1">
    <location>
        <position position="219"/>
    </location>
    <ligand>
        <name>substrate</name>
    </ligand>
</feature>
<feature type="binding site" evidence="1">
    <location>
        <position position="247"/>
    </location>
    <ligand>
        <name>Zn(2+)</name>
        <dbReference type="ChEBI" id="CHEBI:29105"/>
        <label>1</label>
    </ligand>
</feature>
<feature type="binding site" evidence="1">
    <location>
        <position position="251"/>
    </location>
    <ligand>
        <name>substrate</name>
    </ligand>
</feature>
<feature type="binding site" evidence="1">
    <location>
        <position position="263"/>
    </location>
    <ligand>
        <name>substrate</name>
    </ligand>
</feature>
<feature type="modified residue" description="N6-carboxylysine" evidence="1">
    <location>
        <position position="98"/>
    </location>
</feature>
<protein>
    <recommendedName>
        <fullName evidence="1">Dihydroorotase</fullName>
        <shortName evidence="1">DHOase</shortName>
        <ecNumber evidence="1">3.5.2.3</ecNumber>
    </recommendedName>
</protein>
<reference key="1">
    <citation type="journal article" date="2011" name="Appl. Environ. Microbiol.">
        <title>Genomic potential of Marinobacter aquaeolei, a biogeochemical 'opportunitroph'.</title>
        <authorList>
            <person name="Singer E."/>
            <person name="Webb E.A."/>
            <person name="Nelson W.C."/>
            <person name="Heidelberg J.F."/>
            <person name="Ivanova N."/>
            <person name="Pati A."/>
            <person name="Edwards K.J."/>
        </authorList>
    </citation>
    <scope>NUCLEOTIDE SEQUENCE [LARGE SCALE GENOMIC DNA]</scope>
    <source>
        <strain>ATCC 700491 / DSM 11845 / VT8</strain>
    </source>
</reference>
<proteinExistence type="inferred from homology"/>
<evidence type="ECO:0000255" key="1">
    <source>
        <dbReference type="HAMAP-Rule" id="MF_00219"/>
    </source>
</evidence>
<comment type="function">
    <text evidence="1">Catalyzes the reversible cyclization of carbamoyl aspartate to dihydroorotate.</text>
</comment>
<comment type="catalytic activity">
    <reaction evidence="1">
        <text>(S)-dihydroorotate + H2O = N-carbamoyl-L-aspartate + H(+)</text>
        <dbReference type="Rhea" id="RHEA:24296"/>
        <dbReference type="ChEBI" id="CHEBI:15377"/>
        <dbReference type="ChEBI" id="CHEBI:15378"/>
        <dbReference type="ChEBI" id="CHEBI:30864"/>
        <dbReference type="ChEBI" id="CHEBI:32814"/>
        <dbReference type="EC" id="3.5.2.3"/>
    </reaction>
</comment>
<comment type="cofactor">
    <cofactor evidence="1">
        <name>Zn(2+)</name>
        <dbReference type="ChEBI" id="CHEBI:29105"/>
    </cofactor>
    <text evidence="1">Binds 2 Zn(2+) ions per subunit.</text>
</comment>
<comment type="pathway">
    <text evidence="1">Pyrimidine metabolism; UMP biosynthesis via de novo pathway; (S)-dihydroorotate from bicarbonate: step 3/3.</text>
</comment>
<comment type="subunit">
    <text evidence="1">Homodimer.</text>
</comment>
<comment type="similarity">
    <text evidence="1">Belongs to the metallo-dependent hydrolases superfamily. DHOase family. Class II DHOase subfamily.</text>
</comment>
<sequence>MTRQITITRPDDWHLHVRDGDILNDVVPATAACFGRAIIMPNLVPPVTDASAAMAYRDRILAAARGTDFQPLMTLYLTESTTAETIREAKAAGVVAAKLYPAGATTNSASGVTDIRNIYPVLEAMADCGMLLLVHGEVTDSDIDIFDREKVFLERVLAPTLTAFPSLRVVLEHITTAESAEFVRNHQGNNLGATLTPQHLMYNRNHMLVGGIRPHLYCLPILKRNKHQEALREAVASGDPRFFLGTDSAPHAKDKKEAACGCAGCYSAYGAIGLYADIFEELGILDKLEAFASFNGADFYGLPRNTDTVTLVREPWTMPENLPLAGGGIVPLKAGETVNWRLA</sequence>
<dbReference type="EC" id="3.5.2.3" evidence="1"/>
<dbReference type="EMBL" id="CP000514">
    <property type="protein sequence ID" value="ABM19580.1"/>
    <property type="molecule type" value="Genomic_DNA"/>
</dbReference>
<dbReference type="RefSeq" id="WP_011785964.1">
    <property type="nucleotide sequence ID" value="NC_008740.1"/>
</dbReference>
<dbReference type="SMR" id="A1U3L1"/>
<dbReference type="STRING" id="351348.Maqu_2505"/>
<dbReference type="MEROPS" id="M38.A02"/>
<dbReference type="KEGG" id="maq:Maqu_2505"/>
<dbReference type="eggNOG" id="COG0418">
    <property type="taxonomic scope" value="Bacteria"/>
</dbReference>
<dbReference type="HOGENOM" id="CLU_041558_1_0_6"/>
<dbReference type="OrthoDB" id="9808095at2"/>
<dbReference type="UniPathway" id="UPA00070">
    <property type="reaction ID" value="UER00117"/>
</dbReference>
<dbReference type="Proteomes" id="UP000000998">
    <property type="component" value="Chromosome"/>
</dbReference>
<dbReference type="GO" id="GO:0005829">
    <property type="term" value="C:cytosol"/>
    <property type="evidence" value="ECO:0007669"/>
    <property type="project" value="TreeGrafter"/>
</dbReference>
<dbReference type="GO" id="GO:0004151">
    <property type="term" value="F:dihydroorotase activity"/>
    <property type="evidence" value="ECO:0007669"/>
    <property type="project" value="UniProtKB-UniRule"/>
</dbReference>
<dbReference type="GO" id="GO:0008270">
    <property type="term" value="F:zinc ion binding"/>
    <property type="evidence" value="ECO:0007669"/>
    <property type="project" value="UniProtKB-UniRule"/>
</dbReference>
<dbReference type="GO" id="GO:0006207">
    <property type="term" value="P:'de novo' pyrimidine nucleobase biosynthetic process"/>
    <property type="evidence" value="ECO:0007669"/>
    <property type="project" value="TreeGrafter"/>
</dbReference>
<dbReference type="GO" id="GO:0044205">
    <property type="term" value="P:'de novo' UMP biosynthetic process"/>
    <property type="evidence" value="ECO:0007669"/>
    <property type="project" value="UniProtKB-UniRule"/>
</dbReference>
<dbReference type="CDD" id="cd01294">
    <property type="entry name" value="DHOase"/>
    <property type="match status" value="1"/>
</dbReference>
<dbReference type="FunFam" id="3.20.20.140:FF:000006">
    <property type="entry name" value="Dihydroorotase"/>
    <property type="match status" value="1"/>
</dbReference>
<dbReference type="Gene3D" id="3.20.20.140">
    <property type="entry name" value="Metal-dependent hydrolases"/>
    <property type="match status" value="1"/>
</dbReference>
<dbReference type="HAMAP" id="MF_00219">
    <property type="entry name" value="PyrC_classII"/>
    <property type="match status" value="1"/>
</dbReference>
<dbReference type="InterPro" id="IPR006680">
    <property type="entry name" value="Amidohydro-rel"/>
</dbReference>
<dbReference type="InterPro" id="IPR004721">
    <property type="entry name" value="DHOdimr"/>
</dbReference>
<dbReference type="InterPro" id="IPR002195">
    <property type="entry name" value="Dihydroorotase_CS"/>
</dbReference>
<dbReference type="InterPro" id="IPR032466">
    <property type="entry name" value="Metal_Hydrolase"/>
</dbReference>
<dbReference type="NCBIfam" id="TIGR00856">
    <property type="entry name" value="pyrC_dimer"/>
    <property type="match status" value="1"/>
</dbReference>
<dbReference type="PANTHER" id="PTHR43137">
    <property type="entry name" value="DIHYDROOROTASE"/>
    <property type="match status" value="1"/>
</dbReference>
<dbReference type="PANTHER" id="PTHR43137:SF1">
    <property type="entry name" value="DIHYDROOROTASE"/>
    <property type="match status" value="1"/>
</dbReference>
<dbReference type="Pfam" id="PF01979">
    <property type="entry name" value="Amidohydro_1"/>
    <property type="match status" value="1"/>
</dbReference>
<dbReference type="PIRSF" id="PIRSF001237">
    <property type="entry name" value="DHOdimr"/>
    <property type="match status" value="1"/>
</dbReference>
<dbReference type="SUPFAM" id="SSF51556">
    <property type="entry name" value="Metallo-dependent hydrolases"/>
    <property type="match status" value="1"/>
</dbReference>
<dbReference type="PROSITE" id="PS00482">
    <property type="entry name" value="DIHYDROOROTASE_1"/>
    <property type="match status" value="1"/>
</dbReference>
<dbReference type="PROSITE" id="PS00483">
    <property type="entry name" value="DIHYDROOROTASE_2"/>
    <property type="match status" value="1"/>
</dbReference>
<organism>
    <name type="scientific">Marinobacter nauticus (strain ATCC 700491 / DSM 11845 / VT8)</name>
    <name type="common">Marinobacter aquaeolei</name>
    <dbReference type="NCBI Taxonomy" id="351348"/>
    <lineage>
        <taxon>Bacteria</taxon>
        <taxon>Pseudomonadati</taxon>
        <taxon>Pseudomonadota</taxon>
        <taxon>Gammaproteobacteria</taxon>
        <taxon>Pseudomonadales</taxon>
        <taxon>Marinobacteraceae</taxon>
        <taxon>Marinobacter</taxon>
    </lineage>
</organism>